<reference key="1">
    <citation type="journal article" date="2016" name="FEMS Microbiol. Lett.">
        <title>Cysteine biosynthesis in Lactobacillus casei: identification and characterization of a serine acetyltransferase.</title>
        <authorList>
            <person name="Bogicevic B."/>
            <person name="Berthoud H."/>
            <person name="Portmann R."/>
            <person name="Bavan T."/>
            <person name="Meile L."/>
            <person name="Irmler S."/>
        </authorList>
    </citation>
    <scope>NUCLEOTIDE SEQUENCE [GENOMIC DNA]</scope>
    <scope>FUNCTION</scope>
    <scope>CATALYTIC ACTIVITY</scope>
    <scope>SUBSTRATE SPECIFICITY</scope>
    <scope>BIOPHYSICOCHEMICAL PROPERTIES</scope>
    <scope>PATHWAY</scope>
    <source>
        <strain>FAM18110</strain>
    </source>
</reference>
<evidence type="ECO:0000250" key="1">
    <source>
        <dbReference type="UniProtKB" id="P07623"/>
    </source>
</evidence>
<evidence type="ECO:0000269" key="2">
    <source>
    </source>
</evidence>
<evidence type="ECO:0000303" key="3">
    <source>
    </source>
</evidence>
<evidence type="ECO:0000305" key="4"/>
<evidence type="ECO:0000305" key="5">
    <source>
    </source>
</evidence>
<evidence type="ECO:0000312" key="6">
    <source>
        <dbReference type="EMBL" id="AMB19070.1"/>
    </source>
</evidence>
<gene>
    <name evidence="3" type="primary">cysE</name>
</gene>
<proteinExistence type="evidence at protein level"/>
<comment type="function">
    <text evidence="2">Catalyzes the formation of O-acetylserine (OAS) from L-serine and acetyl-CoA. To a lesser extent, is also able to use succinyl-CoA and propionyl-CoA as acyl donors, but not butyryl-CoA. Does not acylate D-serine and L-homoserine.</text>
</comment>
<comment type="catalytic activity">
    <reaction evidence="2">
        <text>L-serine + acetyl-CoA = O-acetyl-L-serine + CoA</text>
        <dbReference type="Rhea" id="RHEA:24560"/>
        <dbReference type="ChEBI" id="CHEBI:33384"/>
        <dbReference type="ChEBI" id="CHEBI:57287"/>
        <dbReference type="ChEBI" id="CHEBI:57288"/>
        <dbReference type="ChEBI" id="CHEBI:58340"/>
        <dbReference type="EC" id="2.3.1.30"/>
    </reaction>
</comment>
<comment type="biophysicochemical properties">
    <kinetics>
        <KM evidence="2">1.13 mM for L-serine</KM>
        <KM evidence="2">0.021 mM for acetyl-CoA</KM>
    </kinetics>
</comment>
<comment type="pathway">
    <text evidence="5">Amino-acid biosynthesis; L-cysteine biosynthesis; L-cysteine from L-serine: step 1/2.</text>
</comment>
<comment type="miscellaneous">
    <text evidence="2">Is able to complement an E.coli cysE mutant strain but not an E.coli metA mutant.</text>
</comment>
<comment type="similarity">
    <text evidence="4">Belongs to the MetA family.</text>
</comment>
<name>CYSE_LACCA</name>
<organism evidence="6">
    <name type="scientific">Lacticaseibacillus casei</name>
    <name type="common">Lactobacillus casei</name>
    <dbReference type="NCBI Taxonomy" id="1582"/>
    <lineage>
        <taxon>Bacteria</taxon>
        <taxon>Bacillati</taxon>
        <taxon>Bacillota</taxon>
        <taxon>Bacilli</taxon>
        <taxon>Lactobacillales</taxon>
        <taxon>Lactobacillaceae</taxon>
        <taxon>Lacticaseibacillus</taxon>
    </lineage>
</organism>
<accession>A0A120HUS7</accession>
<sequence length="271" mass="31522">MEKSPLKIGILNVMHDKADTKTRLQHVLTHTAIPVDLHFYYPMTHYAGRTVPEAVSSILDPLDIHEVATMDGFIITGSPIETLEFDQVHYIAEVRTLLKTLSQHVPNQLYLCWGGMVALNYFFGISKLILPHKLFGVYPQTILEPHPLLKGLKNDFKSPHARYAEMDVRGIHADPRLTINATTTKGKLFMVTEPTDTQTFVFSHIEYDRWGLDSEYKREVAAHPEIDYVRAKHYYHHKNDYDHPKFNWKKTQRTIFDNWIQHVADHRNDNH</sequence>
<feature type="chain" id="PRO_0000436850" description="Serine O-acetyltransferase">
    <location>
        <begin position="1"/>
        <end position="271"/>
    </location>
</feature>
<feature type="active site" description="Acyl-thioester intermediate" evidence="1">
    <location>
        <position position="112"/>
    </location>
</feature>
<feature type="active site" description="Proton acceptor" evidence="1">
    <location>
        <position position="204"/>
    </location>
</feature>
<feature type="active site" evidence="1">
    <location>
        <position position="206"/>
    </location>
</feature>
<dbReference type="EC" id="2.3.1.30" evidence="2"/>
<dbReference type="EMBL" id="KU216159">
    <property type="protein sequence ID" value="AMB19070.1"/>
    <property type="molecule type" value="Genomic_DNA"/>
</dbReference>
<dbReference type="SMR" id="A0A120HUS7"/>
<dbReference type="STRING" id="1582.AAW28_13090"/>
<dbReference type="eggNOG" id="COG1897">
    <property type="taxonomic scope" value="Bacteria"/>
</dbReference>
<dbReference type="UniPathway" id="UPA00136">
    <property type="reaction ID" value="UER00199"/>
</dbReference>
<dbReference type="GO" id="GO:0005737">
    <property type="term" value="C:cytoplasm"/>
    <property type="evidence" value="ECO:0007669"/>
    <property type="project" value="UniProtKB-UniRule"/>
</dbReference>
<dbReference type="GO" id="GO:0009001">
    <property type="term" value="F:serine O-acetyltransferase activity"/>
    <property type="evidence" value="ECO:0000314"/>
    <property type="project" value="UniProtKB"/>
</dbReference>
<dbReference type="GO" id="GO:0006535">
    <property type="term" value="P:cysteine biosynthetic process from serine"/>
    <property type="evidence" value="ECO:0000316"/>
    <property type="project" value="UniProtKB"/>
</dbReference>
<dbReference type="CDD" id="cd03131">
    <property type="entry name" value="GATase1_HTS"/>
    <property type="match status" value="1"/>
</dbReference>
<dbReference type="FunFam" id="3.40.50.880:FF:000123">
    <property type="entry name" value="Serine O-acetyltransferase"/>
    <property type="match status" value="1"/>
</dbReference>
<dbReference type="Gene3D" id="3.40.50.880">
    <property type="match status" value="1"/>
</dbReference>
<dbReference type="HAMAP" id="MF_00295">
    <property type="entry name" value="MetA_acyltransf"/>
    <property type="match status" value="1"/>
</dbReference>
<dbReference type="InterPro" id="IPR029062">
    <property type="entry name" value="Class_I_gatase-like"/>
</dbReference>
<dbReference type="InterPro" id="IPR033752">
    <property type="entry name" value="MetA_family"/>
</dbReference>
<dbReference type="PANTHER" id="PTHR20919">
    <property type="entry name" value="HOMOSERINE O-SUCCINYLTRANSFERASE"/>
    <property type="match status" value="1"/>
</dbReference>
<dbReference type="PANTHER" id="PTHR20919:SF0">
    <property type="entry name" value="HOMOSERINE O-SUCCINYLTRANSFERASE"/>
    <property type="match status" value="1"/>
</dbReference>
<dbReference type="Pfam" id="PF04204">
    <property type="entry name" value="HTS"/>
    <property type="match status" value="1"/>
</dbReference>
<dbReference type="PIRSF" id="PIRSF000450">
    <property type="entry name" value="H_ser_succinyltr"/>
    <property type="match status" value="1"/>
</dbReference>
<dbReference type="SUPFAM" id="SSF52317">
    <property type="entry name" value="Class I glutamine amidotransferase-like"/>
    <property type="match status" value="1"/>
</dbReference>
<protein>
    <recommendedName>
        <fullName evidence="3">Serine O-acetyltransferase</fullName>
        <shortName evidence="3">SAT</shortName>
        <ecNumber evidence="2">2.3.1.30</ecNumber>
    </recommendedName>
</protein>
<keyword id="KW-0012">Acyltransferase</keyword>
<keyword id="KW-0028">Amino-acid biosynthesis</keyword>
<keyword id="KW-0198">Cysteine biosynthesis</keyword>
<keyword id="KW-0808">Transferase</keyword>